<protein>
    <recommendedName>
        <fullName>Leucine aminopeptidase 1</fullName>
        <ecNumber>3.4.11.-</ecNumber>
    </recommendedName>
    <alternativeName>
        <fullName>Leucyl aminopeptidase 1</fullName>
        <shortName>LAP1</shortName>
    </alternativeName>
</protein>
<feature type="signal peptide" evidence="2">
    <location>
        <begin position="1"/>
        <end position="18"/>
    </location>
</feature>
<feature type="propeptide" id="PRO_0000412393" evidence="1">
    <location>
        <begin position="19"/>
        <end position="87"/>
    </location>
</feature>
<feature type="chain" id="PRO_0000412394" description="Leucine aminopeptidase 1">
    <location>
        <begin position="88"/>
        <end position="387"/>
    </location>
</feature>
<feature type="binding site" evidence="1">
    <location>
        <position position="187"/>
    </location>
    <ligand>
        <name>Zn(2+)</name>
        <dbReference type="ChEBI" id="CHEBI:29105"/>
        <label>1</label>
    </ligand>
</feature>
<feature type="binding site" evidence="1">
    <location>
        <position position="206"/>
    </location>
    <ligand>
        <name>Zn(2+)</name>
        <dbReference type="ChEBI" id="CHEBI:29105"/>
        <label>1</label>
    </ligand>
</feature>
<feature type="binding site" evidence="1">
    <location>
        <position position="206"/>
    </location>
    <ligand>
        <name>Zn(2+)</name>
        <dbReference type="ChEBI" id="CHEBI:29105"/>
        <label>2</label>
        <note>catalytic</note>
    </ligand>
</feature>
<feature type="binding site" evidence="1">
    <location>
        <position position="245"/>
    </location>
    <ligand>
        <name>Zn(2+)</name>
        <dbReference type="ChEBI" id="CHEBI:29105"/>
        <label>2</label>
        <note>catalytic</note>
    </ligand>
</feature>
<feature type="binding site" evidence="1">
    <location>
        <position position="272"/>
    </location>
    <ligand>
        <name>Zn(2+)</name>
        <dbReference type="ChEBI" id="CHEBI:29105"/>
        <label>1</label>
    </ligand>
</feature>
<feature type="binding site" evidence="1">
    <location>
        <position position="354"/>
    </location>
    <ligand>
        <name>Zn(2+)</name>
        <dbReference type="ChEBI" id="CHEBI:29105"/>
        <label>2</label>
        <note>catalytic</note>
    </ligand>
</feature>
<feature type="glycosylation site" description="N-linked (GlcNAc...) asparagine" evidence="2">
    <location>
        <position position="179"/>
    </location>
</feature>
<feature type="disulfide bond" evidence="1">
    <location>
        <begin position="321"/>
        <end position="325"/>
    </location>
</feature>
<sequence length="387" mass="43148">MKIRAALALSATASGVLAAVVPQQALLNNPQIHHENEKYLIELAPYQTRWVTEEEKWALKLDGVNFIDITEERNPGFYPTLHQASNVRYPTKMEHVEEVVGLTHRLTKANMERDLEKFTSFHTRYYKSQTGIESATWLYNQVQTVIEQSGAAEHGATVDRFAHSWGQFSIIARIPGKSNKTVVLGAHQDSINLFLPSILAAPGADDDGSGTVTILEALRGLLQSDTVAQGKAPNTIEFHWYSAEEGGMLGSQAIFSQYKQERRDIKAMLQQDMTGYVQGALNAGRKEAVGIMIDYVDRGLTQFLKDVVTAYCNVGYLETKCGYACSDHTSASKYGYPSAMATEAEMENTNKRIHTTDDRIKYLSFDHMLEHAKLTLGFAYELAFASF</sequence>
<gene>
    <name type="primary">lap1</name>
    <name type="ORF">AO090206000073</name>
</gene>
<proteinExistence type="inferred from homology"/>
<evidence type="ECO:0000250" key="1"/>
<evidence type="ECO:0000255" key="2"/>
<evidence type="ECO:0000305" key="3"/>
<keyword id="KW-0031">Aminopeptidase</keyword>
<keyword id="KW-1015">Disulfide bond</keyword>
<keyword id="KW-0325">Glycoprotein</keyword>
<keyword id="KW-0378">Hydrolase</keyword>
<keyword id="KW-0479">Metal-binding</keyword>
<keyword id="KW-0645">Protease</keyword>
<keyword id="KW-1185">Reference proteome</keyword>
<keyword id="KW-0964">Secreted</keyword>
<keyword id="KW-0732">Signal</keyword>
<keyword id="KW-0862">Zinc</keyword>
<keyword id="KW-0865">Zymogen</keyword>
<comment type="function">
    <text evidence="1">Extracellular aminopeptidase that allows assimilation of proteinaceous substrates.</text>
</comment>
<comment type="cofactor">
    <cofactor evidence="1">
        <name>Zn(2+)</name>
        <dbReference type="ChEBI" id="CHEBI:29105"/>
    </cofactor>
    <text evidence="1">Binds 2 Zn(2+) ions per subunit.</text>
</comment>
<comment type="subunit">
    <text evidence="1">Monomer.</text>
</comment>
<comment type="subcellular location">
    <subcellularLocation>
        <location evidence="1">Secreted</location>
    </subcellularLocation>
</comment>
<comment type="similarity">
    <text evidence="3">Belongs to the peptidase M28 family. M28E subfamily.</text>
</comment>
<accession>Q2PIT3</accession>
<dbReference type="EC" id="3.4.11.-"/>
<dbReference type="EMBL" id="BA000055">
    <property type="protein sequence ID" value="BAE65441.1"/>
    <property type="molecule type" value="Genomic_DNA"/>
</dbReference>
<dbReference type="RefSeq" id="XP_001826574.1">
    <property type="nucleotide sequence ID" value="XM_001826522.2"/>
</dbReference>
<dbReference type="SMR" id="Q2PIT3"/>
<dbReference type="STRING" id="510516.Q2PIT3"/>
<dbReference type="MEROPS" id="M28.022"/>
<dbReference type="GlyCosmos" id="Q2PIT3">
    <property type="glycosylation" value="1 site, No reported glycans"/>
</dbReference>
<dbReference type="EnsemblFungi" id="BAE65441">
    <property type="protein sequence ID" value="BAE65441"/>
    <property type="gene ID" value="AO090206000073"/>
</dbReference>
<dbReference type="GeneID" id="5998690"/>
<dbReference type="KEGG" id="aor:AO090206000073"/>
<dbReference type="VEuPathDB" id="FungiDB:AO090206000073"/>
<dbReference type="HOGENOM" id="CLU_025866_0_0_1"/>
<dbReference type="OMA" id="GMLQQDM"/>
<dbReference type="OrthoDB" id="48123at5052"/>
<dbReference type="Proteomes" id="UP000006564">
    <property type="component" value="Chromosome 7"/>
</dbReference>
<dbReference type="GO" id="GO:0005576">
    <property type="term" value="C:extracellular region"/>
    <property type="evidence" value="ECO:0007669"/>
    <property type="project" value="UniProtKB-SubCell"/>
</dbReference>
<dbReference type="GO" id="GO:0004177">
    <property type="term" value="F:aminopeptidase activity"/>
    <property type="evidence" value="ECO:0007669"/>
    <property type="project" value="UniProtKB-KW"/>
</dbReference>
<dbReference type="GO" id="GO:0046872">
    <property type="term" value="F:metal ion binding"/>
    <property type="evidence" value="ECO:0007669"/>
    <property type="project" value="UniProtKB-KW"/>
</dbReference>
<dbReference type="GO" id="GO:0008235">
    <property type="term" value="F:metalloexopeptidase activity"/>
    <property type="evidence" value="ECO:0007669"/>
    <property type="project" value="InterPro"/>
</dbReference>
<dbReference type="GO" id="GO:0006508">
    <property type="term" value="P:proteolysis"/>
    <property type="evidence" value="ECO:0007669"/>
    <property type="project" value="UniProtKB-KW"/>
</dbReference>
<dbReference type="CDD" id="cd03879">
    <property type="entry name" value="M28_AAP"/>
    <property type="match status" value="1"/>
</dbReference>
<dbReference type="FunFam" id="3.40.630.10:FF:000042">
    <property type="entry name" value="Peptide hydrolase"/>
    <property type="match status" value="1"/>
</dbReference>
<dbReference type="Gene3D" id="3.40.630.10">
    <property type="entry name" value="Zn peptidases"/>
    <property type="match status" value="1"/>
</dbReference>
<dbReference type="InterPro" id="IPR045175">
    <property type="entry name" value="M28_fam"/>
</dbReference>
<dbReference type="InterPro" id="IPR007484">
    <property type="entry name" value="Peptidase_M28"/>
</dbReference>
<dbReference type="PANTHER" id="PTHR12147:SF56">
    <property type="entry name" value="AMINOPEPTIDASE YDR415C-RELATED"/>
    <property type="match status" value="1"/>
</dbReference>
<dbReference type="PANTHER" id="PTHR12147">
    <property type="entry name" value="METALLOPEPTIDASE M28 FAMILY MEMBER"/>
    <property type="match status" value="1"/>
</dbReference>
<dbReference type="Pfam" id="PF04389">
    <property type="entry name" value="Peptidase_M28"/>
    <property type="match status" value="1"/>
</dbReference>
<dbReference type="SUPFAM" id="SSF53187">
    <property type="entry name" value="Zn-dependent exopeptidases"/>
    <property type="match status" value="1"/>
</dbReference>
<name>LAP1_ASPOR</name>
<reference key="1">
    <citation type="journal article" date="2005" name="Nature">
        <title>Genome sequencing and analysis of Aspergillus oryzae.</title>
        <authorList>
            <person name="Machida M."/>
            <person name="Asai K."/>
            <person name="Sano M."/>
            <person name="Tanaka T."/>
            <person name="Kumagai T."/>
            <person name="Terai G."/>
            <person name="Kusumoto K."/>
            <person name="Arima T."/>
            <person name="Akita O."/>
            <person name="Kashiwagi Y."/>
            <person name="Abe K."/>
            <person name="Gomi K."/>
            <person name="Horiuchi H."/>
            <person name="Kitamoto K."/>
            <person name="Kobayashi T."/>
            <person name="Takeuchi M."/>
            <person name="Denning D.W."/>
            <person name="Galagan J.E."/>
            <person name="Nierman W.C."/>
            <person name="Yu J."/>
            <person name="Archer D.B."/>
            <person name="Bennett J.W."/>
            <person name="Bhatnagar D."/>
            <person name="Cleveland T.E."/>
            <person name="Fedorova N.D."/>
            <person name="Gotoh O."/>
            <person name="Horikawa H."/>
            <person name="Hosoyama A."/>
            <person name="Ichinomiya M."/>
            <person name="Igarashi R."/>
            <person name="Iwashita K."/>
            <person name="Juvvadi P.R."/>
            <person name="Kato M."/>
            <person name="Kato Y."/>
            <person name="Kin T."/>
            <person name="Kokubun A."/>
            <person name="Maeda H."/>
            <person name="Maeyama N."/>
            <person name="Maruyama J."/>
            <person name="Nagasaki H."/>
            <person name="Nakajima T."/>
            <person name="Oda K."/>
            <person name="Okada K."/>
            <person name="Paulsen I."/>
            <person name="Sakamoto K."/>
            <person name="Sawano T."/>
            <person name="Takahashi M."/>
            <person name="Takase K."/>
            <person name="Terabayashi Y."/>
            <person name="Wortman J.R."/>
            <person name="Yamada O."/>
            <person name="Yamagata Y."/>
            <person name="Anazawa H."/>
            <person name="Hata Y."/>
            <person name="Koide Y."/>
            <person name="Komori T."/>
            <person name="Koyama Y."/>
            <person name="Minetoki T."/>
            <person name="Suharnan S."/>
            <person name="Tanaka A."/>
            <person name="Isono K."/>
            <person name="Kuhara S."/>
            <person name="Ogasawara N."/>
            <person name="Kikuchi H."/>
        </authorList>
    </citation>
    <scope>NUCLEOTIDE SEQUENCE [LARGE SCALE GENOMIC DNA]</scope>
    <source>
        <strain>ATCC 42149 / RIB 40</strain>
    </source>
</reference>
<organism>
    <name type="scientific">Aspergillus oryzae (strain ATCC 42149 / RIB 40)</name>
    <name type="common">Yellow koji mold</name>
    <dbReference type="NCBI Taxonomy" id="510516"/>
    <lineage>
        <taxon>Eukaryota</taxon>
        <taxon>Fungi</taxon>
        <taxon>Dikarya</taxon>
        <taxon>Ascomycota</taxon>
        <taxon>Pezizomycotina</taxon>
        <taxon>Eurotiomycetes</taxon>
        <taxon>Eurotiomycetidae</taxon>
        <taxon>Eurotiales</taxon>
        <taxon>Aspergillaceae</taxon>
        <taxon>Aspergillus</taxon>
        <taxon>Aspergillus subgen. Circumdati</taxon>
    </lineage>
</organism>